<feature type="chain" id="PRO_0000261721" description="Large ribosomal subunit protein uL13">
    <location>
        <begin position="1"/>
        <end position="144"/>
    </location>
</feature>
<dbReference type="EMBL" id="CP000112">
    <property type="protein sequence ID" value="ABB39403.1"/>
    <property type="molecule type" value="Genomic_DNA"/>
</dbReference>
<dbReference type="RefSeq" id="WP_011368442.1">
    <property type="nucleotide sequence ID" value="NC_007519.1"/>
</dbReference>
<dbReference type="SMR" id="Q30Y43"/>
<dbReference type="STRING" id="207559.Dde_2607"/>
<dbReference type="KEGG" id="dde:Dde_2607"/>
<dbReference type="eggNOG" id="COG0102">
    <property type="taxonomic scope" value="Bacteria"/>
</dbReference>
<dbReference type="HOGENOM" id="CLU_082184_2_2_7"/>
<dbReference type="Proteomes" id="UP000002710">
    <property type="component" value="Chromosome"/>
</dbReference>
<dbReference type="GO" id="GO:0022625">
    <property type="term" value="C:cytosolic large ribosomal subunit"/>
    <property type="evidence" value="ECO:0007669"/>
    <property type="project" value="TreeGrafter"/>
</dbReference>
<dbReference type="GO" id="GO:0003729">
    <property type="term" value="F:mRNA binding"/>
    <property type="evidence" value="ECO:0007669"/>
    <property type="project" value="TreeGrafter"/>
</dbReference>
<dbReference type="GO" id="GO:0003735">
    <property type="term" value="F:structural constituent of ribosome"/>
    <property type="evidence" value="ECO:0007669"/>
    <property type="project" value="InterPro"/>
</dbReference>
<dbReference type="GO" id="GO:0017148">
    <property type="term" value="P:negative regulation of translation"/>
    <property type="evidence" value="ECO:0007669"/>
    <property type="project" value="TreeGrafter"/>
</dbReference>
<dbReference type="GO" id="GO:0006412">
    <property type="term" value="P:translation"/>
    <property type="evidence" value="ECO:0007669"/>
    <property type="project" value="UniProtKB-UniRule"/>
</dbReference>
<dbReference type="CDD" id="cd00392">
    <property type="entry name" value="Ribosomal_L13"/>
    <property type="match status" value="1"/>
</dbReference>
<dbReference type="FunFam" id="3.90.1180.10:FF:000001">
    <property type="entry name" value="50S ribosomal protein L13"/>
    <property type="match status" value="1"/>
</dbReference>
<dbReference type="Gene3D" id="3.90.1180.10">
    <property type="entry name" value="Ribosomal protein L13"/>
    <property type="match status" value="1"/>
</dbReference>
<dbReference type="HAMAP" id="MF_01366">
    <property type="entry name" value="Ribosomal_uL13"/>
    <property type="match status" value="1"/>
</dbReference>
<dbReference type="InterPro" id="IPR005822">
    <property type="entry name" value="Ribosomal_uL13"/>
</dbReference>
<dbReference type="InterPro" id="IPR005823">
    <property type="entry name" value="Ribosomal_uL13_bac-type"/>
</dbReference>
<dbReference type="InterPro" id="IPR023563">
    <property type="entry name" value="Ribosomal_uL13_CS"/>
</dbReference>
<dbReference type="InterPro" id="IPR036899">
    <property type="entry name" value="Ribosomal_uL13_sf"/>
</dbReference>
<dbReference type="NCBIfam" id="TIGR01066">
    <property type="entry name" value="rplM_bact"/>
    <property type="match status" value="1"/>
</dbReference>
<dbReference type="PANTHER" id="PTHR11545:SF2">
    <property type="entry name" value="LARGE RIBOSOMAL SUBUNIT PROTEIN UL13M"/>
    <property type="match status" value="1"/>
</dbReference>
<dbReference type="PANTHER" id="PTHR11545">
    <property type="entry name" value="RIBOSOMAL PROTEIN L13"/>
    <property type="match status" value="1"/>
</dbReference>
<dbReference type="Pfam" id="PF00572">
    <property type="entry name" value="Ribosomal_L13"/>
    <property type="match status" value="1"/>
</dbReference>
<dbReference type="PIRSF" id="PIRSF002181">
    <property type="entry name" value="Ribosomal_L13"/>
    <property type="match status" value="1"/>
</dbReference>
<dbReference type="SUPFAM" id="SSF52161">
    <property type="entry name" value="Ribosomal protein L13"/>
    <property type="match status" value="1"/>
</dbReference>
<dbReference type="PROSITE" id="PS00783">
    <property type="entry name" value="RIBOSOMAL_L13"/>
    <property type="match status" value="1"/>
</dbReference>
<accession>Q30Y43</accession>
<protein>
    <recommendedName>
        <fullName evidence="1">Large ribosomal subunit protein uL13</fullName>
    </recommendedName>
    <alternativeName>
        <fullName evidence="2">50S ribosomal protein L13</fullName>
    </alternativeName>
</protein>
<name>RL13_OLEA2</name>
<gene>
    <name evidence="1" type="primary">rplM</name>
    <name type="ordered locus">Dde_2607</name>
</gene>
<reference key="1">
    <citation type="journal article" date="2011" name="J. Bacteriol.">
        <title>Complete genome sequence and updated annotation of Desulfovibrio alaskensis G20.</title>
        <authorList>
            <person name="Hauser L.J."/>
            <person name="Land M.L."/>
            <person name="Brown S.D."/>
            <person name="Larimer F."/>
            <person name="Keller K.L."/>
            <person name="Rapp-Giles B.J."/>
            <person name="Price M.N."/>
            <person name="Lin M."/>
            <person name="Bruce D.C."/>
            <person name="Detter J.C."/>
            <person name="Tapia R."/>
            <person name="Han C.S."/>
            <person name="Goodwin L.A."/>
            <person name="Cheng J.F."/>
            <person name="Pitluck S."/>
            <person name="Copeland A."/>
            <person name="Lucas S."/>
            <person name="Nolan M."/>
            <person name="Lapidus A.L."/>
            <person name="Palumbo A.V."/>
            <person name="Wall J.D."/>
        </authorList>
    </citation>
    <scope>NUCLEOTIDE SEQUENCE [LARGE SCALE GENOMIC DNA]</scope>
    <source>
        <strain>ATCC BAA-1058 / DSM 17464 / G20</strain>
    </source>
</reference>
<comment type="function">
    <text evidence="1">This protein is one of the early assembly proteins of the 50S ribosomal subunit, although it is not seen to bind rRNA by itself. It is important during the early stages of 50S assembly.</text>
</comment>
<comment type="subunit">
    <text evidence="1">Part of the 50S ribosomal subunit.</text>
</comment>
<comment type="similarity">
    <text evidence="1">Belongs to the universal ribosomal protein uL13 family.</text>
</comment>
<evidence type="ECO:0000255" key="1">
    <source>
        <dbReference type="HAMAP-Rule" id="MF_01366"/>
    </source>
</evidence>
<evidence type="ECO:0000305" key="2"/>
<keyword id="KW-1185">Reference proteome</keyword>
<keyword id="KW-0687">Ribonucleoprotein</keyword>
<keyword id="KW-0689">Ribosomal protein</keyword>
<organism>
    <name type="scientific">Oleidesulfovibrio alaskensis (strain ATCC BAA-1058 / DSM 17464 / G20)</name>
    <name type="common">Desulfovibrio alaskensis</name>
    <dbReference type="NCBI Taxonomy" id="207559"/>
    <lineage>
        <taxon>Bacteria</taxon>
        <taxon>Pseudomonadati</taxon>
        <taxon>Thermodesulfobacteriota</taxon>
        <taxon>Desulfovibrionia</taxon>
        <taxon>Desulfovibrionales</taxon>
        <taxon>Desulfovibrionaceae</taxon>
        <taxon>Oleidesulfovibrio</taxon>
    </lineage>
</organism>
<proteinExistence type="inferred from homology"/>
<sequence>MKTFSPKPQDITRDWYVVDAEDKILGRLAAQIAHRLRGKHKPEFAPHVDNGDFIVVVNCEKIAVTGKKLSDKKYYRYSGYVGGLREQTLANVLATKPERALINAVKGMLPRNRLGRAMLKKLKVYAGSEHPHQAQNPQALELKY</sequence>